<accession>A9IQZ6</accession>
<organism>
    <name type="scientific">Bordetella petrii (strain ATCC BAA-461 / DSM 12804 / CCUG 43448)</name>
    <dbReference type="NCBI Taxonomy" id="340100"/>
    <lineage>
        <taxon>Bacteria</taxon>
        <taxon>Pseudomonadati</taxon>
        <taxon>Pseudomonadota</taxon>
        <taxon>Betaproteobacteria</taxon>
        <taxon>Burkholderiales</taxon>
        <taxon>Alcaligenaceae</taxon>
        <taxon>Bordetella</taxon>
    </lineage>
</organism>
<name>HSCA_BORPD</name>
<evidence type="ECO:0000255" key="1">
    <source>
        <dbReference type="HAMAP-Rule" id="MF_00679"/>
    </source>
</evidence>
<gene>
    <name evidence="1" type="primary">hscA</name>
    <name type="ordered locus">Bpet2773</name>
</gene>
<comment type="function">
    <text evidence="1">Chaperone involved in the maturation of iron-sulfur cluster-containing proteins. Has a low intrinsic ATPase activity which is markedly stimulated by HscB.</text>
</comment>
<comment type="similarity">
    <text evidence="1">Belongs to the heat shock protein 70 family.</text>
</comment>
<proteinExistence type="inferred from homology"/>
<reference key="1">
    <citation type="journal article" date="2008" name="BMC Genomics">
        <title>The missing link: Bordetella petrii is endowed with both the metabolic versatility of environmental bacteria and virulence traits of pathogenic Bordetellae.</title>
        <authorList>
            <person name="Gross R."/>
            <person name="Guzman C.A."/>
            <person name="Sebaihia M."/>
            <person name="Martin dos Santos V.A.P."/>
            <person name="Pieper D.H."/>
            <person name="Koebnik R."/>
            <person name="Lechner M."/>
            <person name="Bartels D."/>
            <person name="Buhrmester J."/>
            <person name="Choudhuri J.V."/>
            <person name="Ebensen T."/>
            <person name="Gaigalat L."/>
            <person name="Herrmann S."/>
            <person name="Khachane A.N."/>
            <person name="Larisch C."/>
            <person name="Link S."/>
            <person name="Linke B."/>
            <person name="Meyer F."/>
            <person name="Mormann S."/>
            <person name="Nakunst D."/>
            <person name="Rueckert C."/>
            <person name="Schneiker-Bekel S."/>
            <person name="Schulze K."/>
            <person name="Voerholter F.-J."/>
            <person name="Yevsa T."/>
            <person name="Engle J.T."/>
            <person name="Goldman W.E."/>
            <person name="Puehler A."/>
            <person name="Goebel U.B."/>
            <person name="Goesmann A."/>
            <person name="Bloecker H."/>
            <person name="Kaiser O."/>
            <person name="Martinez-Arias R."/>
        </authorList>
    </citation>
    <scope>NUCLEOTIDE SEQUENCE [LARGE SCALE GENOMIC DNA]</scope>
    <source>
        <strain>ATCC BAA-461 / DSM 12804 / CCUG 43448</strain>
    </source>
</reference>
<protein>
    <recommendedName>
        <fullName evidence="1">Chaperone protein HscA homolog</fullName>
    </recommendedName>
</protein>
<dbReference type="EMBL" id="AM902716">
    <property type="protein sequence ID" value="CAP43115.1"/>
    <property type="molecule type" value="Genomic_DNA"/>
</dbReference>
<dbReference type="SMR" id="A9IQZ6"/>
<dbReference type="STRING" id="94624.Bpet2773"/>
<dbReference type="KEGG" id="bpt:Bpet2773"/>
<dbReference type="eggNOG" id="COG0443">
    <property type="taxonomic scope" value="Bacteria"/>
</dbReference>
<dbReference type="Proteomes" id="UP000001225">
    <property type="component" value="Chromosome"/>
</dbReference>
<dbReference type="GO" id="GO:0005524">
    <property type="term" value="F:ATP binding"/>
    <property type="evidence" value="ECO:0007669"/>
    <property type="project" value="UniProtKB-KW"/>
</dbReference>
<dbReference type="GO" id="GO:0016887">
    <property type="term" value="F:ATP hydrolysis activity"/>
    <property type="evidence" value="ECO:0007669"/>
    <property type="project" value="UniProtKB-UniRule"/>
</dbReference>
<dbReference type="GO" id="GO:0140662">
    <property type="term" value="F:ATP-dependent protein folding chaperone"/>
    <property type="evidence" value="ECO:0007669"/>
    <property type="project" value="InterPro"/>
</dbReference>
<dbReference type="GO" id="GO:0051082">
    <property type="term" value="F:unfolded protein binding"/>
    <property type="evidence" value="ECO:0007669"/>
    <property type="project" value="InterPro"/>
</dbReference>
<dbReference type="GO" id="GO:0016226">
    <property type="term" value="P:iron-sulfur cluster assembly"/>
    <property type="evidence" value="ECO:0007669"/>
    <property type="project" value="InterPro"/>
</dbReference>
<dbReference type="FunFam" id="3.30.420.40:FF:000046">
    <property type="entry name" value="Chaperone protein HscA"/>
    <property type="match status" value="1"/>
</dbReference>
<dbReference type="FunFam" id="2.60.34.10:FF:000005">
    <property type="entry name" value="Chaperone protein HscA homolog"/>
    <property type="match status" value="1"/>
</dbReference>
<dbReference type="Gene3D" id="1.20.1270.10">
    <property type="match status" value="1"/>
</dbReference>
<dbReference type="Gene3D" id="3.30.420.40">
    <property type="match status" value="2"/>
</dbReference>
<dbReference type="Gene3D" id="3.90.640.10">
    <property type="entry name" value="Actin, Chain A, domain 4"/>
    <property type="match status" value="1"/>
</dbReference>
<dbReference type="Gene3D" id="2.60.34.10">
    <property type="entry name" value="Substrate Binding Domain Of DNAk, Chain A, domain 1"/>
    <property type="match status" value="1"/>
</dbReference>
<dbReference type="HAMAP" id="MF_00679">
    <property type="entry name" value="HscA"/>
    <property type="match status" value="1"/>
</dbReference>
<dbReference type="InterPro" id="IPR043129">
    <property type="entry name" value="ATPase_NBD"/>
</dbReference>
<dbReference type="InterPro" id="IPR018181">
    <property type="entry name" value="Heat_shock_70_CS"/>
</dbReference>
<dbReference type="InterPro" id="IPR029048">
    <property type="entry name" value="HSP70_C_sf"/>
</dbReference>
<dbReference type="InterPro" id="IPR029047">
    <property type="entry name" value="HSP70_peptide-bd_sf"/>
</dbReference>
<dbReference type="InterPro" id="IPR013126">
    <property type="entry name" value="Hsp_70_fam"/>
</dbReference>
<dbReference type="InterPro" id="IPR010236">
    <property type="entry name" value="ISC_FeS_clus_asmbl_HscA"/>
</dbReference>
<dbReference type="NCBIfam" id="TIGR01991">
    <property type="entry name" value="HscA"/>
    <property type="match status" value="1"/>
</dbReference>
<dbReference type="NCBIfam" id="NF003520">
    <property type="entry name" value="PRK05183.1"/>
    <property type="match status" value="1"/>
</dbReference>
<dbReference type="PANTHER" id="PTHR19375">
    <property type="entry name" value="HEAT SHOCK PROTEIN 70KDA"/>
    <property type="match status" value="1"/>
</dbReference>
<dbReference type="Pfam" id="PF00012">
    <property type="entry name" value="HSP70"/>
    <property type="match status" value="1"/>
</dbReference>
<dbReference type="PRINTS" id="PR00301">
    <property type="entry name" value="HEATSHOCK70"/>
</dbReference>
<dbReference type="SUPFAM" id="SSF53067">
    <property type="entry name" value="Actin-like ATPase domain"/>
    <property type="match status" value="2"/>
</dbReference>
<dbReference type="SUPFAM" id="SSF100934">
    <property type="entry name" value="Heat shock protein 70kD (HSP70), C-terminal subdomain"/>
    <property type="match status" value="1"/>
</dbReference>
<dbReference type="SUPFAM" id="SSF100920">
    <property type="entry name" value="Heat shock protein 70kD (HSP70), peptide-binding domain"/>
    <property type="match status" value="1"/>
</dbReference>
<dbReference type="PROSITE" id="PS00297">
    <property type="entry name" value="HSP70_1"/>
    <property type="match status" value="1"/>
</dbReference>
<dbReference type="PROSITE" id="PS00329">
    <property type="entry name" value="HSP70_2"/>
    <property type="match status" value="1"/>
</dbReference>
<dbReference type="PROSITE" id="PS01036">
    <property type="entry name" value="HSP70_3"/>
    <property type="match status" value="1"/>
</dbReference>
<keyword id="KW-0067">ATP-binding</keyword>
<keyword id="KW-0143">Chaperone</keyword>
<keyword id="KW-0547">Nucleotide-binding</keyword>
<feature type="chain" id="PRO_1000131665" description="Chaperone protein HscA homolog">
    <location>
        <begin position="1"/>
        <end position="620"/>
    </location>
</feature>
<sequence length="620" mass="65618">MALLQISEPGESPAPHQRKLAVGIDLGTTNSLVAAVRSSTPEVLRDAEGQALLPSAVRYCADGKVVIGRQALAQQAADPFNTVVSVKRFMGRSLDEARASGAPYEFVDAPGMVRLRTAQGELSPVEVSAQILAVLRQRAEDVLGDDLVGAVITVPAYFDDAQRQATRDAARLAGLNVLRLLNEPTAAAIAYGLDQAAEGTYAVYDLGGGTFDVSILRLTKGVFEVVATGGDTALGGDDFDWSISEFARASLGDAPLAPADRRTVLVAARAAREALSQASEAPLRATLQDGRQLNLTLTQAQFEQLAEPLVRRTLDRARSALRDAGLAVGDINGVVMVGGATRMPVVRRAVGELFGTEPLVDLDPDQVVALGAALQANLLAGNRLPGEDWLLLDVIPLSLGLETMGGLVERIIPRNSTIPVARAQEFTTFKDGQGAMSVHVVQGERELVSDCRSLARFELRGIPPMVAGAARIRVTFQVDADGLLSVTAREQSTGVEAAVSVKPSYGLSDDEITRMLADSVAQADSDARARMLREQQVEARQLVESVRAALAADGDLLDADERRVVDERLQAAAAAQDADDADAVRAAVQALSAATEDFAARRMDRGIRAALAGRKLDEIA</sequence>